<comment type="similarity">
    <text evidence="2">Belongs to the cyclin family. Cyclin AB subfamily.</text>
</comment>
<comment type="sequence caution" evidence="2">
    <conflict type="erroneous gene model prediction">
        <sequence resource="EMBL-CDS" id="AAT69653"/>
    </conflict>
</comment>
<accession>Q0DH40</accession>
<accession>Q6F327</accession>
<reference key="1">
    <citation type="journal article" date="2005" name="Mol. Genet. Genomics">
        <title>A fine physical map of the rice chromosome 5.</title>
        <authorList>
            <person name="Cheng C.-H."/>
            <person name="Chung M.C."/>
            <person name="Liu S.-M."/>
            <person name="Chen S.-K."/>
            <person name="Kao F.Y."/>
            <person name="Lin S.-J."/>
            <person name="Hsiao S.-H."/>
            <person name="Tseng I.C."/>
            <person name="Hsing Y.-I.C."/>
            <person name="Wu H.-P."/>
            <person name="Chen C.-S."/>
            <person name="Shaw J.-F."/>
            <person name="Wu J."/>
            <person name="Matsumoto T."/>
            <person name="Sasaki T."/>
            <person name="Chen H.-C."/>
            <person name="Chow T.-Y."/>
        </authorList>
    </citation>
    <scope>NUCLEOTIDE SEQUENCE [LARGE SCALE GENOMIC DNA]</scope>
    <source>
        <strain>cv. Nipponbare</strain>
    </source>
</reference>
<reference key="2">
    <citation type="journal article" date="2005" name="Nature">
        <title>The map-based sequence of the rice genome.</title>
        <authorList>
            <consortium name="International rice genome sequencing project (IRGSP)"/>
        </authorList>
    </citation>
    <scope>NUCLEOTIDE SEQUENCE [LARGE SCALE GENOMIC DNA]</scope>
    <source>
        <strain>cv. Nipponbare</strain>
    </source>
</reference>
<reference key="3">
    <citation type="journal article" date="2008" name="Nucleic Acids Res.">
        <title>The rice annotation project database (RAP-DB): 2008 update.</title>
        <authorList>
            <consortium name="The rice annotation project (RAP)"/>
        </authorList>
    </citation>
    <scope>GENOME REANNOTATION</scope>
    <source>
        <strain>cv. Nipponbare</strain>
    </source>
</reference>
<reference key="4">
    <citation type="journal article" date="2013" name="Rice">
        <title>Improvement of the Oryza sativa Nipponbare reference genome using next generation sequence and optical map data.</title>
        <authorList>
            <person name="Kawahara Y."/>
            <person name="de la Bastide M."/>
            <person name="Hamilton J.P."/>
            <person name="Kanamori H."/>
            <person name="McCombie W.R."/>
            <person name="Ouyang S."/>
            <person name="Schwartz D.C."/>
            <person name="Tanaka T."/>
            <person name="Wu J."/>
            <person name="Zhou S."/>
            <person name="Childs K.L."/>
            <person name="Davidson R.M."/>
            <person name="Lin H."/>
            <person name="Quesada-Ocampo L."/>
            <person name="Vaillancourt B."/>
            <person name="Sakai H."/>
            <person name="Lee S.S."/>
            <person name="Kim J."/>
            <person name="Numa H."/>
            <person name="Itoh T."/>
            <person name="Buell C.R."/>
            <person name="Matsumoto T."/>
        </authorList>
    </citation>
    <scope>GENOME REANNOTATION</scope>
    <source>
        <strain>cv. Nipponbare</strain>
    </source>
</reference>
<reference key="5">
    <citation type="journal article" date="2005" name="PLoS Biol.">
        <title>The genomes of Oryza sativa: a history of duplications.</title>
        <authorList>
            <person name="Yu J."/>
            <person name="Wang J."/>
            <person name="Lin W."/>
            <person name="Li S."/>
            <person name="Li H."/>
            <person name="Zhou J."/>
            <person name="Ni P."/>
            <person name="Dong W."/>
            <person name="Hu S."/>
            <person name="Zeng C."/>
            <person name="Zhang J."/>
            <person name="Zhang Y."/>
            <person name="Li R."/>
            <person name="Xu Z."/>
            <person name="Li S."/>
            <person name="Li X."/>
            <person name="Zheng H."/>
            <person name="Cong L."/>
            <person name="Lin L."/>
            <person name="Yin J."/>
            <person name="Geng J."/>
            <person name="Li G."/>
            <person name="Shi J."/>
            <person name="Liu J."/>
            <person name="Lv H."/>
            <person name="Li J."/>
            <person name="Wang J."/>
            <person name="Deng Y."/>
            <person name="Ran L."/>
            <person name="Shi X."/>
            <person name="Wang X."/>
            <person name="Wu Q."/>
            <person name="Li C."/>
            <person name="Ren X."/>
            <person name="Wang J."/>
            <person name="Wang X."/>
            <person name="Li D."/>
            <person name="Liu D."/>
            <person name="Zhang X."/>
            <person name="Ji Z."/>
            <person name="Zhao W."/>
            <person name="Sun Y."/>
            <person name="Zhang Z."/>
            <person name="Bao J."/>
            <person name="Han Y."/>
            <person name="Dong L."/>
            <person name="Ji J."/>
            <person name="Chen P."/>
            <person name="Wu S."/>
            <person name="Liu J."/>
            <person name="Xiao Y."/>
            <person name="Bu D."/>
            <person name="Tan J."/>
            <person name="Yang L."/>
            <person name="Ye C."/>
            <person name="Zhang J."/>
            <person name="Xu J."/>
            <person name="Zhou Y."/>
            <person name="Yu Y."/>
            <person name="Zhang B."/>
            <person name="Zhuang S."/>
            <person name="Wei H."/>
            <person name="Liu B."/>
            <person name="Lei M."/>
            <person name="Yu H."/>
            <person name="Li Y."/>
            <person name="Xu H."/>
            <person name="Wei S."/>
            <person name="He X."/>
            <person name="Fang L."/>
            <person name="Zhang Z."/>
            <person name="Zhang Y."/>
            <person name="Huang X."/>
            <person name="Su Z."/>
            <person name="Tong W."/>
            <person name="Li J."/>
            <person name="Tong Z."/>
            <person name="Li S."/>
            <person name="Ye J."/>
            <person name="Wang L."/>
            <person name="Fang L."/>
            <person name="Lei T."/>
            <person name="Chen C.-S."/>
            <person name="Chen H.-C."/>
            <person name="Xu Z."/>
            <person name="Li H."/>
            <person name="Huang H."/>
            <person name="Zhang F."/>
            <person name="Xu H."/>
            <person name="Li N."/>
            <person name="Zhao C."/>
            <person name="Li S."/>
            <person name="Dong L."/>
            <person name="Huang Y."/>
            <person name="Li L."/>
            <person name="Xi Y."/>
            <person name="Qi Q."/>
            <person name="Li W."/>
            <person name="Zhang B."/>
            <person name="Hu W."/>
            <person name="Zhang Y."/>
            <person name="Tian X."/>
            <person name="Jiao Y."/>
            <person name="Liang X."/>
            <person name="Jin J."/>
            <person name="Gao L."/>
            <person name="Zheng W."/>
            <person name="Hao B."/>
            <person name="Liu S.-M."/>
            <person name="Wang W."/>
            <person name="Yuan L."/>
            <person name="Cao M."/>
            <person name="McDermott J."/>
            <person name="Samudrala R."/>
            <person name="Wang J."/>
            <person name="Wong G.K.-S."/>
            <person name="Yang H."/>
        </authorList>
    </citation>
    <scope>NUCLEOTIDE SEQUENCE [LARGE SCALE GENOMIC DNA]</scope>
    <source>
        <strain>cv. Nipponbare</strain>
    </source>
</reference>
<reference key="6">
    <citation type="journal article" date="2006" name="Mol. Genet. Genomics">
        <title>Genome-wide analysis of cyclin family in rice (Oryza sativa L.).</title>
        <authorList>
            <person name="La H."/>
            <person name="Li J."/>
            <person name="Ji Z."/>
            <person name="Cheng Y."/>
            <person name="Li X."/>
            <person name="Jiang S."/>
            <person name="Venkatesh P.N."/>
            <person name="Ramachandran S."/>
        </authorList>
    </citation>
    <scope>GENE FAMILY</scope>
    <scope>NOMENCLATURE</scope>
</reference>
<evidence type="ECO:0000256" key="1">
    <source>
        <dbReference type="SAM" id="MobiDB-lite"/>
    </source>
</evidence>
<evidence type="ECO:0000305" key="2"/>
<keyword id="KW-0131">Cell cycle</keyword>
<keyword id="KW-0132">Cell division</keyword>
<keyword id="KW-0195">Cyclin</keyword>
<keyword id="KW-1185">Reference proteome</keyword>
<dbReference type="EMBL" id="AC129718">
    <property type="protein sequence ID" value="AAT69653.1"/>
    <property type="status" value="ALT_SEQ"/>
    <property type="molecule type" value="Genomic_DNA"/>
</dbReference>
<dbReference type="EMBL" id="AP008211">
    <property type="protein sequence ID" value="BAF17833.1"/>
    <property type="molecule type" value="Genomic_DNA"/>
</dbReference>
<dbReference type="EMBL" id="AP014961">
    <property type="status" value="NOT_ANNOTATED_CDS"/>
    <property type="molecule type" value="Genomic_DNA"/>
</dbReference>
<dbReference type="EMBL" id="CM000142">
    <property type="status" value="NOT_ANNOTATED_CDS"/>
    <property type="molecule type" value="Genomic_DNA"/>
</dbReference>
<dbReference type="RefSeq" id="XP_015638235.1">
    <property type="nucleotide sequence ID" value="XM_015782749.1"/>
</dbReference>
<dbReference type="SMR" id="Q0DH40"/>
<dbReference type="FunCoup" id="Q0DH40">
    <property type="interactions" value="1165"/>
</dbReference>
<dbReference type="STRING" id="39947.Q0DH40"/>
<dbReference type="PaxDb" id="39947-Q0DH40"/>
<dbReference type="KEGG" id="dosa:Os05g0493500"/>
<dbReference type="eggNOG" id="KOG0653">
    <property type="taxonomic scope" value="Eukaryota"/>
</dbReference>
<dbReference type="InParanoid" id="Q0DH40"/>
<dbReference type="OrthoDB" id="5590282at2759"/>
<dbReference type="Proteomes" id="UP000000763">
    <property type="component" value="Chromosome 5"/>
</dbReference>
<dbReference type="Proteomes" id="UP000007752">
    <property type="component" value="Chromosome 5"/>
</dbReference>
<dbReference type="Proteomes" id="UP000059680">
    <property type="component" value="Chromosome 5"/>
</dbReference>
<dbReference type="GO" id="GO:0000307">
    <property type="term" value="C:cyclin-dependent protein kinase holoenzyme complex"/>
    <property type="evidence" value="ECO:0000318"/>
    <property type="project" value="GO_Central"/>
</dbReference>
<dbReference type="GO" id="GO:0005737">
    <property type="term" value="C:cytoplasm"/>
    <property type="evidence" value="ECO:0000318"/>
    <property type="project" value="GO_Central"/>
</dbReference>
<dbReference type="GO" id="GO:0005634">
    <property type="term" value="C:nucleus"/>
    <property type="evidence" value="ECO:0000318"/>
    <property type="project" value="GO_Central"/>
</dbReference>
<dbReference type="GO" id="GO:0016538">
    <property type="term" value="F:cyclin-dependent protein serine/threonine kinase regulator activity"/>
    <property type="evidence" value="ECO:0000318"/>
    <property type="project" value="GO_Central"/>
</dbReference>
<dbReference type="GO" id="GO:0051301">
    <property type="term" value="P:cell division"/>
    <property type="evidence" value="ECO:0007669"/>
    <property type="project" value="UniProtKB-KW"/>
</dbReference>
<dbReference type="GO" id="GO:0000082">
    <property type="term" value="P:G1/S transition of mitotic cell cycle"/>
    <property type="evidence" value="ECO:0000318"/>
    <property type="project" value="GO_Central"/>
</dbReference>
<dbReference type="FunFam" id="1.10.472.10:FF:000032">
    <property type="entry name" value="G2/mitotic-specific cyclin-1"/>
    <property type="match status" value="1"/>
</dbReference>
<dbReference type="Gene3D" id="1.10.472.10">
    <property type="entry name" value="Cyclin-like"/>
    <property type="match status" value="2"/>
</dbReference>
<dbReference type="InterPro" id="IPR039361">
    <property type="entry name" value="Cyclin"/>
</dbReference>
<dbReference type="InterPro" id="IPR013763">
    <property type="entry name" value="Cyclin-like_dom"/>
</dbReference>
<dbReference type="InterPro" id="IPR036915">
    <property type="entry name" value="Cyclin-like_sf"/>
</dbReference>
<dbReference type="InterPro" id="IPR046965">
    <property type="entry name" value="Cyclin_A/B-like"/>
</dbReference>
<dbReference type="InterPro" id="IPR004367">
    <property type="entry name" value="Cyclin_C-dom"/>
</dbReference>
<dbReference type="InterPro" id="IPR006671">
    <property type="entry name" value="Cyclin_N"/>
</dbReference>
<dbReference type="InterPro" id="IPR048258">
    <property type="entry name" value="Cyclins_cyclin-box"/>
</dbReference>
<dbReference type="PANTHER" id="PTHR10177">
    <property type="entry name" value="CYCLINS"/>
    <property type="match status" value="1"/>
</dbReference>
<dbReference type="Pfam" id="PF02984">
    <property type="entry name" value="Cyclin_C"/>
    <property type="match status" value="1"/>
</dbReference>
<dbReference type="Pfam" id="PF00134">
    <property type="entry name" value="Cyclin_N"/>
    <property type="match status" value="1"/>
</dbReference>
<dbReference type="PIRSF" id="PIRSF001771">
    <property type="entry name" value="Cyclin_A_B_D_E"/>
    <property type="match status" value="1"/>
</dbReference>
<dbReference type="SMART" id="SM00385">
    <property type="entry name" value="CYCLIN"/>
    <property type="match status" value="2"/>
</dbReference>
<dbReference type="SMART" id="SM01332">
    <property type="entry name" value="Cyclin_C"/>
    <property type="match status" value="1"/>
</dbReference>
<dbReference type="SUPFAM" id="SSF47954">
    <property type="entry name" value="Cyclin-like"/>
    <property type="match status" value="2"/>
</dbReference>
<dbReference type="PROSITE" id="PS00292">
    <property type="entry name" value="CYCLINS"/>
    <property type="match status" value="1"/>
</dbReference>
<gene>
    <name type="primary">CYCB1-5</name>
    <name type="ordered locus">Os05g0493500</name>
    <name type="ordered locus">LOC_Os05g41390</name>
    <name type="ORF">OsJ_018267</name>
    <name type="ORF">OSJNBa0088I06.19</name>
</gene>
<organism>
    <name type="scientific">Oryza sativa subsp. japonica</name>
    <name type="common">Rice</name>
    <dbReference type="NCBI Taxonomy" id="39947"/>
    <lineage>
        <taxon>Eukaryota</taxon>
        <taxon>Viridiplantae</taxon>
        <taxon>Streptophyta</taxon>
        <taxon>Embryophyta</taxon>
        <taxon>Tracheophyta</taxon>
        <taxon>Spermatophyta</taxon>
        <taxon>Magnoliopsida</taxon>
        <taxon>Liliopsida</taxon>
        <taxon>Poales</taxon>
        <taxon>Poaceae</taxon>
        <taxon>BOP clade</taxon>
        <taxon>Oryzoideae</taxon>
        <taxon>Oryzeae</taxon>
        <taxon>Oryzinae</taxon>
        <taxon>Oryza</taxon>
        <taxon>Oryza sativa</taxon>
    </lineage>
</organism>
<proteinExistence type="inferred from homology"/>
<sequence length="449" mass="49278">MATRHQRAAAAPQPANRGAAVAAGKQKAAATAAAGRPGARNRQALGDIGNVLNAHVVDGKIQLPEGINRPITRSFGAQLLKKAQENAVAANKIVVQNPARKEPAPKPAKKVVPRPENAAKASTGAGVNENKKPSESEGAGSSSGGSALKYSRKKVVNTLTSVLTARSKHACGITEKPKEVVEDIDKLDGDNQLAVVEYIEDIYNFYRTAQLERRPTDYMSSQVEVNPKMRAILADWIIDVHYKFELMPETLYLTMYVIDRYLSLQPVLRRELQLVGVAAMLIASKYEEMWAPEVQDLIHVCDNAYSRQHILAMEKNILNRLQWNITVPTPYVFLLRFIKAAGGDKELENMVFFFSEMALKEYGMASLCPSLVAASAVYAAQCTLKRSPLWTSTLKHHTGFTESQLRECAKVLVNAHAAAPESKLKTAYRKYASEQLGRVSLRPPAVCLA</sequence>
<protein>
    <recommendedName>
        <fullName>Cyclin-B1-5</fullName>
    </recommendedName>
    <alternativeName>
        <fullName>G2/mitotic-specific cyclin-B1-5</fullName>
        <shortName>CycB1;5</shortName>
    </alternativeName>
</protein>
<feature type="chain" id="PRO_0000287011" description="Cyclin-B1-5">
    <location>
        <begin position="1"/>
        <end position="449"/>
    </location>
</feature>
<feature type="region of interest" description="Disordered" evidence="1">
    <location>
        <begin position="1"/>
        <end position="37"/>
    </location>
</feature>
<feature type="region of interest" description="Disordered" evidence="1">
    <location>
        <begin position="98"/>
        <end position="147"/>
    </location>
</feature>
<feature type="compositionally biased region" description="Low complexity" evidence="1">
    <location>
        <begin position="8"/>
        <end position="37"/>
    </location>
</feature>
<feature type="compositionally biased region" description="Low complexity" evidence="1">
    <location>
        <begin position="136"/>
        <end position="147"/>
    </location>
</feature>
<name>CCB15_ORYSJ</name>